<protein>
    <recommendedName>
        <fullName evidence="1">Polyribonucleotide nucleotidyltransferase</fullName>
        <ecNumber evidence="1">2.7.7.8</ecNumber>
    </recommendedName>
    <alternativeName>
        <fullName evidence="1">Polynucleotide phosphorylase</fullName>
        <shortName evidence="1">PNPase</shortName>
    </alternativeName>
</protein>
<feature type="chain" id="PRO_0000329721" description="Polyribonucleotide nucleotidyltransferase">
    <location>
        <begin position="1"/>
        <end position="759"/>
    </location>
</feature>
<feature type="domain" description="KH" evidence="1">
    <location>
        <begin position="588"/>
        <end position="647"/>
    </location>
</feature>
<feature type="domain" description="S1 motif" evidence="1">
    <location>
        <begin position="659"/>
        <end position="728"/>
    </location>
</feature>
<feature type="region of interest" description="Disordered" evidence="2">
    <location>
        <begin position="734"/>
        <end position="759"/>
    </location>
</feature>
<feature type="compositionally biased region" description="Low complexity" evidence="2">
    <location>
        <begin position="741"/>
        <end position="759"/>
    </location>
</feature>
<feature type="binding site" evidence="1">
    <location>
        <position position="522"/>
    </location>
    <ligand>
        <name>Mg(2+)</name>
        <dbReference type="ChEBI" id="CHEBI:18420"/>
    </ligand>
</feature>
<feature type="binding site" evidence="1">
    <location>
        <position position="528"/>
    </location>
    <ligand>
        <name>Mg(2+)</name>
        <dbReference type="ChEBI" id="CHEBI:18420"/>
    </ligand>
</feature>
<sequence>MSVVEIEDGVYESTAVIDNGSFGTRTIRFETGRLAQQAAGAVVAYLDDETMLLSATSASKSPKDHFDFFPLTIDVEERMYAAGRIPGSFFRREGRPSTDAILTCRLIDRPLRPTFVSGLRNEIQVVVTVMSLDPKDLYDVVAINAASASTQIAGLPFSGPVGGVRVALIDGTWVAFPTVEQLERAVFDMVVAGRKTADDVAIMMVEAEATDKVVELVAGGAQAPTEAVVAEGLEAAKPFIKVLCEAQQELAGRAAKPTADYPLFPEYGEDVYYAVASVATDALSEALTIAGKEERNNRTDEIKVEVLGRLADQFAGREKEIGGAFRSLTKKLVRQRILTDHFRIDGRGVTDIRALSAEVAIVPRAHGSALFERGETQILGVTTLDMVKMAQQIDSLGPETSKRYMHHYNFPPYSTGETGRVGSPKRREIGHGALAERALMPVLPSVEEFPYAIRQVSEALSSNGSTSMGSVCASTLSLLNAGVPLKAPVAGIAMGLVSDDVEVDGKTERRFVTLTDILGAEDAFGDMDFKCAGTKDFVTALQLDTKLDGIPSQVLAGALAQAKDARITILEVMAEAIDAPDEMSPYAPRITTIKVPVDKIGEVIGPKGKMINSITEETGASISIEDDGTVFVGASNGEAAQAAIDKINAIANPQLPKIGERFLGTVVKTTDFGAFVSLLPGRDGLVHISKLGRGKRIAKVEDVAKVGDKLRVEIADIDNRGKISLVLVAEEEAAEASDNGSATPSDKAPATADATTAGN</sequence>
<name>PNP_MYCSJ</name>
<comment type="function">
    <text evidence="1">Involved in mRNA degradation. Catalyzes the phosphorolysis of single-stranded polyribonucleotides processively in the 3'- to 5'-direction.</text>
</comment>
<comment type="catalytic activity">
    <reaction evidence="1">
        <text>RNA(n+1) + phosphate = RNA(n) + a ribonucleoside 5'-diphosphate</text>
        <dbReference type="Rhea" id="RHEA:22096"/>
        <dbReference type="Rhea" id="RHEA-COMP:14527"/>
        <dbReference type="Rhea" id="RHEA-COMP:17342"/>
        <dbReference type="ChEBI" id="CHEBI:43474"/>
        <dbReference type="ChEBI" id="CHEBI:57930"/>
        <dbReference type="ChEBI" id="CHEBI:140395"/>
        <dbReference type="EC" id="2.7.7.8"/>
    </reaction>
</comment>
<comment type="cofactor">
    <cofactor evidence="1">
        <name>Mg(2+)</name>
        <dbReference type="ChEBI" id="CHEBI:18420"/>
    </cofactor>
</comment>
<comment type="subcellular location">
    <subcellularLocation>
        <location evidence="1">Cytoplasm</location>
    </subcellularLocation>
</comment>
<comment type="similarity">
    <text evidence="1">Belongs to the polyribonucleotide nucleotidyltransferase family.</text>
</comment>
<organism>
    <name type="scientific">Mycobacterium sp. (strain JLS)</name>
    <dbReference type="NCBI Taxonomy" id="164757"/>
    <lineage>
        <taxon>Bacteria</taxon>
        <taxon>Bacillati</taxon>
        <taxon>Actinomycetota</taxon>
        <taxon>Actinomycetes</taxon>
        <taxon>Mycobacteriales</taxon>
        <taxon>Mycobacteriaceae</taxon>
        <taxon>Mycobacterium</taxon>
    </lineage>
</organism>
<keyword id="KW-0963">Cytoplasm</keyword>
<keyword id="KW-0460">Magnesium</keyword>
<keyword id="KW-0479">Metal-binding</keyword>
<keyword id="KW-0548">Nucleotidyltransferase</keyword>
<keyword id="KW-0694">RNA-binding</keyword>
<keyword id="KW-0808">Transferase</keyword>
<dbReference type="EC" id="2.7.7.8" evidence="1"/>
<dbReference type="EMBL" id="CP000580">
    <property type="protein sequence ID" value="ABN97870.1"/>
    <property type="molecule type" value="Genomic_DNA"/>
</dbReference>
<dbReference type="SMR" id="A3PY93"/>
<dbReference type="KEGG" id="mjl:Mjls_2083"/>
<dbReference type="HOGENOM" id="CLU_004217_2_2_11"/>
<dbReference type="BioCyc" id="MSP164757:G1G8C-2102-MONOMER"/>
<dbReference type="GO" id="GO:0005829">
    <property type="term" value="C:cytosol"/>
    <property type="evidence" value="ECO:0007669"/>
    <property type="project" value="TreeGrafter"/>
</dbReference>
<dbReference type="GO" id="GO:0000175">
    <property type="term" value="F:3'-5'-RNA exonuclease activity"/>
    <property type="evidence" value="ECO:0007669"/>
    <property type="project" value="TreeGrafter"/>
</dbReference>
<dbReference type="GO" id="GO:0000287">
    <property type="term" value="F:magnesium ion binding"/>
    <property type="evidence" value="ECO:0007669"/>
    <property type="project" value="UniProtKB-UniRule"/>
</dbReference>
<dbReference type="GO" id="GO:0004654">
    <property type="term" value="F:polyribonucleotide nucleotidyltransferase activity"/>
    <property type="evidence" value="ECO:0007669"/>
    <property type="project" value="UniProtKB-UniRule"/>
</dbReference>
<dbReference type="GO" id="GO:0003723">
    <property type="term" value="F:RNA binding"/>
    <property type="evidence" value="ECO:0007669"/>
    <property type="project" value="UniProtKB-UniRule"/>
</dbReference>
<dbReference type="GO" id="GO:0006402">
    <property type="term" value="P:mRNA catabolic process"/>
    <property type="evidence" value="ECO:0007669"/>
    <property type="project" value="UniProtKB-UniRule"/>
</dbReference>
<dbReference type="GO" id="GO:0006396">
    <property type="term" value="P:RNA processing"/>
    <property type="evidence" value="ECO:0007669"/>
    <property type="project" value="InterPro"/>
</dbReference>
<dbReference type="CDD" id="cd02393">
    <property type="entry name" value="KH-I_PNPase"/>
    <property type="match status" value="1"/>
</dbReference>
<dbReference type="CDD" id="cd11364">
    <property type="entry name" value="RNase_PH_PNPase_2"/>
    <property type="match status" value="1"/>
</dbReference>
<dbReference type="CDD" id="cd04472">
    <property type="entry name" value="S1_PNPase"/>
    <property type="match status" value="1"/>
</dbReference>
<dbReference type="FunFam" id="2.40.50.140:FF:000069">
    <property type="entry name" value="Polyribonucleotide nucleotidyltransferase"/>
    <property type="match status" value="1"/>
</dbReference>
<dbReference type="FunFam" id="3.30.1370.10:FF:000001">
    <property type="entry name" value="Polyribonucleotide nucleotidyltransferase"/>
    <property type="match status" value="1"/>
</dbReference>
<dbReference type="FunFam" id="3.30.230.70:FF:000001">
    <property type="entry name" value="Polyribonucleotide nucleotidyltransferase"/>
    <property type="match status" value="1"/>
</dbReference>
<dbReference type="FunFam" id="3.30.230.70:FF:000002">
    <property type="entry name" value="Polyribonucleotide nucleotidyltransferase"/>
    <property type="match status" value="1"/>
</dbReference>
<dbReference type="Gene3D" id="3.30.230.70">
    <property type="entry name" value="GHMP Kinase, N-terminal domain"/>
    <property type="match status" value="2"/>
</dbReference>
<dbReference type="Gene3D" id="3.30.1370.10">
    <property type="entry name" value="K Homology domain, type 1"/>
    <property type="match status" value="1"/>
</dbReference>
<dbReference type="Gene3D" id="2.40.50.140">
    <property type="entry name" value="Nucleic acid-binding proteins"/>
    <property type="match status" value="1"/>
</dbReference>
<dbReference type="HAMAP" id="MF_01595">
    <property type="entry name" value="PNPase"/>
    <property type="match status" value="1"/>
</dbReference>
<dbReference type="InterPro" id="IPR001247">
    <property type="entry name" value="ExoRNase_PH_dom1"/>
</dbReference>
<dbReference type="InterPro" id="IPR015847">
    <property type="entry name" value="ExoRNase_PH_dom2"/>
</dbReference>
<dbReference type="InterPro" id="IPR036345">
    <property type="entry name" value="ExoRNase_PH_dom2_sf"/>
</dbReference>
<dbReference type="InterPro" id="IPR014069">
    <property type="entry name" value="GPSI/PNP"/>
</dbReference>
<dbReference type="InterPro" id="IPR004087">
    <property type="entry name" value="KH_dom"/>
</dbReference>
<dbReference type="InterPro" id="IPR004088">
    <property type="entry name" value="KH_dom_type_1"/>
</dbReference>
<dbReference type="InterPro" id="IPR036612">
    <property type="entry name" value="KH_dom_type_1_sf"/>
</dbReference>
<dbReference type="InterPro" id="IPR012340">
    <property type="entry name" value="NA-bd_OB-fold"/>
</dbReference>
<dbReference type="InterPro" id="IPR012162">
    <property type="entry name" value="PNPase"/>
</dbReference>
<dbReference type="InterPro" id="IPR027408">
    <property type="entry name" value="PNPase/RNase_PH_dom_sf"/>
</dbReference>
<dbReference type="InterPro" id="IPR015848">
    <property type="entry name" value="PNPase_PH_RNA-bd_bac/org-type"/>
</dbReference>
<dbReference type="InterPro" id="IPR036456">
    <property type="entry name" value="PNPase_PH_RNA-bd_sf"/>
</dbReference>
<dbReference type="InterPro" id="IPR020568">
    <property type="entry name" value="Ribosomal_Su5_D2-typ_SF"/>
</dbReference>
<dbReference type="InterPro" id="IPR003029">
    <property type="entry name" value="S1_domain"/>
</dbReference>
<dbReference type="NCBIfam" id="TIGR03591">
    <property type="entry name" value="polynuc_phos"/>
    <property type="match status" value="1"/>
</dbReference>
<dbReference type="NCBIfam" id="TIGR02696">
    <property type="entry name" value="pppGpp_PNP"/>
    <property type="match status" value="1"/>
</dbReference>
<dbReference type="NCBIfam" id="NF008805">
    <property type="entry name" value="PRK11824.1"/>
    <property type="match status" value="1"/>
</dbReference>
<dbReference type="PANTHER" id="PTHR11252">
    <property type="entry name" value="POLYRIBONUCLEOTIDE NUCLEOTIDYLTRANSFERASE"/>
    <property type="match status" value="1"/>
</dbReference>
<dbReference type="PANTHER" id="PTHR11252:SF0">
    <property type="entry name" value="POLYRIBONUCLEOTIDE NUCLEOTIDYLTRANSFERASE 1, MITOCHONDRIAL"/>
    <property type="match status" value="1"/>
</dbReference>
<dbReference type="Pfam" id="PF00013">
    <property type="entry name" value="KH_1"/>
    <property type="match status" value="1"/>
</dbReference>
<dbReference type="Pfam" id="PF03726">
    <property type="entry name" value="PNPase"/>
    <property type="match status" value="1"/>
</dbReference>
<dbReference type="Pfam" id="PF01138">
    <property type="entry name" value="RNase_PH"/>
    <property type="match status" value="2"/>
</dbReference>
<dbReference type="Pfam" id="PF03725">
    <property type="entry name" value="RNase_PH_C"/>
    <property type="match status" value="1"/>
</dbReference>
<dbReference type="Pfam" id="PF00575">
    <property type="entry name" value="S1"/>
    <property type="match status" value="1"/>
</dbReference>
<dbReference type="PIRSF" id="PIRSF005499">
    <property type="entry name" value="PNPase"/>
    <property type="match status" value="1"/>
</dbReference>
<dbReference type="SMART" id="SM00322">
    <property type="entry name" value="KH"/>
    <property type="match status" value="1"/>
</dbReference>
<dbReference type="SMART" id="SM00316">
    <property type="entry name" value="S1"/>
    <property type="match status" value="1"/>
</dbReference>
<dbReference type="SUPFAM" id="SSF54791">
    <property type="entry name" value="Eukaryotic type KH-domain (KH-domain type I)"/>
    <property type="match status" value="1"/>
</dbReference>
<dbReference type="SUPFAM" id="SSF50249">
    <property type="entry name" value="Nucleic acid-binding proteins"/>
    <property type="match status" value="1"/>
</dbReference>
<dbReference type="SUPFAM" id="SSF46915">
    <property type="entry name" value="Polynucleotide phosphorylase/guanosine pentaphosphate synthase (PNPase/GPSI), domain 3"/>
    <property type="match status" value="1"/>
</dbReference>
<dbReference type="SUPFAM" id="SSF55666">
    <property type="entry name" value="Ribonuclease PH domain 2-like"/>
    <property type="match status" value="2"/>
</dbReference>
<dbReference type="SUPFAM" id="SSF54211">
    <property type="entry name" value="Ribosomal protein S5 domain 2-like"/>
    <property type="match status" value="2"/>
</dbReference>
<dbReference type="PROSITE" id="PS50084">
    <property type="entry name" value="KH_TYPE_1"/>
    <property type="match status" value="1"/>
</dbReference>
<dbReference type="PROSITE" id="PS50126">
    <property type="entry name" value="S1"/>
    <property type="match status" value="1"/>
</dbReference>
<evidence type="ECO:0000255" key="1">
    <source>
        <dbReference type="HAMAP-Rule" id="MF_01595"/>
    </source>
</evidence>
<evidence type="ECO:0000256" key="2">
    <source>
        <dbReference type="SAM" id="MobiDB-lite"/>
    </source>
</evidence>
<proteinExistence type="inferred from homology"/>
<gene>
    <name evidence="1" type="primary">pnp</name>
    <name type="ordered locus">Mjls_2083</name>
</gene>
<accession>A3PY93</accession>
<reference key="1">
    <citation type="submission" date="2007-02" db="EMBL/GenBank/DDBJ databases">
        <title>Complete sequence of Mycobacterium sp. JLS.</title>
        <authorList>
            <consortium name="US DOE Joint Genome Institute"/>
            <person name="Copeland A."/>
            <person name="Lucas S."/>
            <person name="Lapidus A."/>
            <person name="Barry K."/>
            <person name="Detter J.C."/>
            <person name="Glavina del Rio T."/>
            <person name="Hammon N."/>
            <person name="Israni S."/>
            <person name="Dalin E."/>
            <person name="Tice H."/>
            <person name="Pitluck S."/>
            <person name="Chain P."/>
            <person name="Malfatti S."/>
            <person name="Shin M."/>
            <person name="Vergez L."/>
            <person name="Schmutz J."/>
            <person name="Larimer F."/>
            <person name="Land M."/>
            <person name="Hauser L."/>
            <person name="Kyrpides N."/>
            <person name="Mikhailova N."/>
            <person name="Miller C.D."/>
            <person name="Anderson A.J."/>
            <person name="Sims R.C."/>
            <person name="Richardson P."/>
        </authorList>
    </citation>
    <scope>NUCLEOTIDE SEQUENCE [LARGE SCALE GENOMIC DNA]</scope>
    <source>
        <strain>JLS</strain>
    </source>
</reference>